<protein>
    <recommendedName>
        <fullName evidence="1">Imidazoleglycerol-phosphate dehydratase</fullName>
        <shortName evidence="1">IGPD</shortName>
        <ecNumber evidence="1">4.2.1.19</ecNumber>
    </recommendedName>
</protein>
<sequence>MTAVQAARRARIERRTKESDIVIELDLDGTGRVDVETGVPFYDHMLTALGSHASFDLTVRTTGDVEIEAHHTIEDTAIALGAALGQALGDKRGIRRFGDAFIPMDETLAHAAVDVSGRPYCVHSGEPDHLQHSTIAGSSVPYHTVINRHVFESLAMNARIALHVRVLYGRDPHHITEAQYKAVARALRQAVEPDPRVSDVPSTKGVL</sequence>
<accession>P60886</accession>
<name>HIS7_MYCPA</name>
<organism>
    <name type="scientific">Mycolicibacterium paratuberculosis (strain ATCC BAA-968 / K-10)</name>
    <name type="common">Mycobacterium paratuberculosis</name>
    <dbReference type="NCBI Taxonomy" id="262316"/>
    <lineage>
        <taxon>Bacteria</taxon>
        <taxon>Bacillati</taxon>
        <taxon>Actinomycetota</taxon>
        <taxon>Actinomycetes</taxon>
        <taxon>Mycobacteriales</taxon>
        <taxon>Mycobacteriaceae</taxon>
        <taxon>Mycobacterium</taxon>
        <taxon>Mycobacterium avium complex (MAC)</taxon>
    </lineage>
</organism>
<dbReference type="EC" id="4.2.1.19" evidence="1"/>
<dbReference type="EMBL" id="AE016958">
    <property type="protein sequence ID" value="AAS03612.1"/>
    <property type="molecule type" value="Genomic_DNA"/>
</dbReference>
<dbReference type="RefSeq" id="WP_003876207.1">
    <property type="nucleotide sequence ID" value="NZ_CP106873.1"/>
</dbReference>
<dbReference type="SMR" id="P60886"/>
<dbReference type="STRING" id="262316.MAP_1295"/>
<dbReference type="KEGG" id="mpa:MAP_1295"/>
<dbReference type="eggNOG" id="COG0131">
    <property type="taxonomic scope" value="Bacteria"/>
</dbReference>
<dbReference type="HOGENOM" id="CLU_044308_3_0_11"/>
<dbReference type="UniPathway" id="UPA00031">
    <property type="reaction ID" value="UER00011"/>
</dbReference>
<dbReference type="Proteomes" id="UP000000580">
    <property type="component" value="Chromosome"/>
</dbReference>
<dbReference type="GO" id="GO:0005737">
    <property type="term" value="C:cytoplasm"/>
    <property type="evidence" value="ECO:0007669"/>
    <property type="project" value="UniProtKB-SubCell"/>
</dbReference>
<dbReference type="GO" id="GO:0004424">
    <property type="term" value="F:imidazoleglycerol-phosphate dehydratase activity"/>
    <property type="evidence" value="ECO:0007669"/>
    <property type="project" value="UniProtKB-UniRule"/>
</dbReference>
<dbReference type="GO" id="GO:0000105">
    <property type="term" value="P:L-histidine biosynthetic process"/>
    <property type="evidence" value="ECO:0007669"/>
    <property type="project" value="UniProtKB-UniRule"/>
</dbReference>
<dbReference type="CDD" id="cd07914">
    <property type="entry name" value="IGPD"/>
    <property type="match status" value="1"/>
</dbReference>
<dbReference type="FunFam" id="3.30.230.40:FF:000001">
    <property type="entry name" value="Imidazoleglycerol-phosphate dehydratase HisB"/>
    <property type="match status" value="1"/>
</dbReference>
<dbReference type="FunFam" id="3.30.230.40:FF:000003">
    <property type="entry name" value="Imidazoleglycerol-phosphate dehydratase HisB"/>
    <property type="match status" value="1"/>
</dbReference>
<dbReference type="Gene3D" id="3.30.230.40">
    <property type="entry name" value="Imidazole glycerol phosphate dehydratase, domain 1"/>
    <property type="match status" value="2"/>
</dbReference>
<dbReference type="HAMAP" id="MF_00076">
    <property type="entry name" value="HisB"/>
    <property type="match status" value="1"/>
</dbReference>
<dbReference type="InterPro" id="IPR038494">
    <property type="entry name" value="IGPD_sf"/>
</dbReference>
<dbReference type="InterPro" id="IPR000807">
    <property type="entry name" value="ImidazoleglycerolP_deHydtase"/>
</dbReference>
<dbReference type="InterPro" id="IPR020565">
    <property type="entry name" value="ImidazoleglycerP_deHydtase_CS"/>
</dbReference>
<dbReference type="InterPro" id="IPR020568">
    <property type="entry name" value="Ribosomal_Su5_D2-typ_SF"/>
</dbReference>
<dbReference type="NCBIfam" id="NF002110">
    <property type="entry name" value="PRK00951.1-6"/>
    <property type="match status" value="1"/>
</dbReference>
<dbReference type="NCBIfam" id="NF002111">
    <property type="entry name" value="PRK00951.2-1"/>
    <property type="match status" value="1"/>
</dbReference>
<dbReference type="NCBIfam" id="NF002114">
    <property type="entry name" value="PRK00951.2-4"/>
    <property type="match status" value="1"/>
</dbReference>
<dbReference type="PANTHER" id="PTHR23133:SF2">
    <property type="entry name" value="IMIDAZOLEGLYCEROL-PHOSPHATE DEHYDRATASE"/>
    <property type="match status" value="1"/>
</dbReference>
<dbReference type="PANTHER" id="PTHR23133">
    <property type="entry name" value="IMIDAZOLEGLYCEROL-PHOSPHATE DEHYDRATASE HIS7"/>
    <property type="match status" value="1"/>
</dbReference>
<dbReference type="Pfam" id="PF00475">
    <property type="entry name" value="IGPD"/>
    <property type="match status" value="1"/>
</dbReference>
<dbReference type="SUPFAM" id="SSF54211">
    <property type="entry name" value="Ribosomal protein S5 domain 2-like"/>
    <property type="match status" value="2"/>
</dbReference>
<dbReference type="PROSITE" id="PS00954">
    <property type="entry name" value="IGP_DEHYDRATASE_1"/>
    <property type="match status" value="1"/>
</dbReference>
<dbReference type="PROSITE" id="PS00955">
    <property type="entry name" value="IGP_DEHYDRATASE_2"/>
    <property type="match status" value="1"/>
</dbReference>
<keyword id="KW-0028">Amino-acid biosynthesis</keyword>
<keyword id="KW-0963">Cytoplasm</keyword>
<keyword id="KW-0368">Histidine biosynthesis</keyword>
<keyword id="KW-0456">Lyase</keyword>
<keyword id="KW-1185">Reference proteome</keyword>
<feature type="chain" id="PRO_0000158145" description="Imidazoleglycerol-phosphate dehydratase">
    <location>
        <begin position="1"/>
        <end position="207"/>
    </location>
</feature>
<reference key="1">
    <citation type="journal article" date="2005" name="Proc. Natl. Acad. Sci. U.S.A.">
        <title>The complete genome sequence of Mycobacterium avium subspecies paratuberculosis.</title>
        <authorList>
            <person name="Li L."/>
            <person name="Bannantine J.P."/>
            <person name="Zhang Q."/>
            <person name="Amonsin A."/>
            <person name="May B.J."/>
            <person name="Alt D."/>
            <person name="Banerji N."/>
            <person name="Kanjilal S."/>
            <person name="Kapur V."/>
        </authorList>
    </citation>
    <scope>NUCLEOTIDE SEQUENCE [LARGE SCALE GENOMIC DNA]</scope>
    <source>
        <strain>ATCC BAA-968 / K-10</strain>
    </source>
</reference>
<proteinExistence type="inferred from homology"/>
<comment type="catalytic activity">
    <reaction evidence="1">
        <text>D-erythro-1-(imidazol-4-yl)glycerol 3-phosphate = 3-(imidazol-4-yl)-2-oxopropyl phosphate + H2O</text>
        <dbReference type="Rhea" id="RHEA:11040"/>
        <dbReference type="ChEBI" id="CHEBI:15377"/>
        <dbReference type="ChEBI" id="CHEBI:57766"/>
        <dbReference type="ChEBI" id="CHEBI:58278"/>
        <dbReference type="EC" id="4.2.1.19"/>
    </reaction>
</comment>
<comment type="pathway">
    <text evidence="1">Amino-acid biosynthesis; L-histidine biosynthesis; L-histidine from 5-phospho-alpha-D-ribose 1-diphosphate: step 6/9.</text>
</comment>
<comment type="subcellular location">
    <subcellularLocation>
        <location evidence="1">Cytoplasm</location>
    </subcellularLocation>
</comment>
<comment type="similarity">
    <text evidence="1">Belongs to the imidazoleglycerol-phosphate dehydratase family.</text>
</comment>
<gene>
    <name evidence="1" type="primary">hisB</name>
    <name type="ordered locus">MAP_1295</name>
</gene>
<evidence type="ECO:0000255" key="1">
    <source>
        <dbReference type="HAMAP-Rule" id="MF_00076"/>
    </source>
</evidence>